<feature type="chain" id="PRO_0000301609" description="Aspartate carbamoyltransferase catalytic subunit">
    <location>
        <begin position="1"/>
        <end position="320"/>
    </location>
</feature>
<feature type="binding site" evidence="1">
    <location>
        <position position="58"/>
    </location>
    <ligand>
        <name>carbamoyl phosphate</name>
        <dbReference type="ChEBI" id="CHEBI:58228"/>
    </ligand>
</feature>
<feature type="binding site" evidence="1">
    <location>
        <position position="59"/>
    </location>
    <ligand>
        <name>carbamoyl phosphate</name>
        <dbReference type="ChEBI" id="CHEBI:58228"/>
    </ligand>
</feature>
<feature type="binding site" evidence="1">
    <location>
        <position position="86"/>
    </location>
    <ligand>
        <name>L-aspartate</name>
        <dbReference type="ChEBI" id="CHEBI:29991"/>
    </ligand>
</feature>
<feature type="binding site" evidence="1">
    <location>
        <position position="108"/>
    </location>
    <ligand>
        <name>carbamoyl phosphate</name>
        <dbReference type="ChEBI" id="CHEBI:58228"/>
    </ligand>
</feature>
<feature type="binding site" evidence="1">
    <location>
        <position position="136"/>
    </location>
    <ligand>
        <name>carbamoyl phosphate</name>
        <dbReference type="ChEBI" id="CHEBI:58228"/>
    </ligand>
</feature>
<feature type="binding site" evidence="1">
    <location>
        <position position="139"/>
    </location>
    <ligand>
        <name>carbamoyl phosphate</name>
        <dbReference type="ChEBI" id="CHEBI:58228"/>
    </ligand>
</feature>
<feature type="binding site" evidence="1">
    <location>
        <position position="169"/>
    </location>
    <ligand>
        <name>L-aspartate</name>
        <dbReference type="ChEBI" id="CHEBI:29991"/>
    </ligand>
</feature>
<feature type="binding site" evidence="1">
    <location>
        <position position="223"/>
    </location>
    <ligand>
        <name>L-aspartate</name>
        <dbReference type="ChEBI" id="CHEBI:29991"/>
    </ligand>
</feature>
<feature type="binding site" evidence="1">
    <location>
        <position position="264"/>
    </location>
    <ligand>
        <name>carbamoyl phosphate</name>
        <dbReference type="ChEBI" id="CHEBI:58228"/>
    </ligand>
</feature>
<feature type="binding site" evidence="1">
    <location>
        <position position="265"/>
    </location>
    <ligand>
        <name>carbamoyl phosphate</name>
        <dbReference type="ChEBI" id="CHEBI:58228"/>
    </ligand>
</feature>
<name>PYRB_CERS4</name>
<comment type="function">
    <text evidence="1">Catalyzes the condensation of carbamoyl phosphate and aspartate to form carbamoyl aspartate and inorganic phosphate, the committed step in the de novo pyrimidine nucleotide biosynthesis pathway.</text>
</comment>
<comment type="catalytic activity">
    <reaction evidence="1">
        <text>carbamoyl phosphate + L-aspartate = N-carbamoyl-L-aspartate + phosphate + H(+)</text>
        <dbReference type="Rhea" id="RHEA:20013"/>
        <dbReference type="ChEBI" id="CHEBI:15378"/>
        <dbReference type="ChEBI" id="CHEBI:29991"/>
        <dbReference type="ChEBI" id="CHEBI:32814"/>
        <dbReference type="ChEBI" id="CHEBI:43474"/>
        <dbReference type="ChEBI" id="CHEBI:58228"/>
        <dbReference type="EC" id="2.1.3.2"/>
    </reaction>
</comment>
<comment type="pathway">
    <text evidence="1">Pyrimidine metabolism; UMP biosynthesis via de novo pathway; (S)-dihydroorotate from bicarbonate: step 2/3.</text>
</comment>
<comment type="subunit">
    <text evidence="1">Heterododecamer (2C3:3R2) of six catalytic PyrB chains organized as two trimers (C3), and six regulatory PyrI chains organized as three dimers (R2).</text>
</comment>
<comment type="similarity">
    <text evidence="1">Belongs to the aspartate/ornithine carbamoyltransferase superfamily. ATCase family.</text>
</comment>
<organism>
    <name type="scientific">Cereibacter sphaeroides (strain ATCC 17023 / DSM 158 / JCM 6121 / CCUG 31486 / LMG 2827 / NBRC 12203 / NCIMB 8253 / ATH 2.4.1.)</name>
    <name type="common">Rhodobacter sphaeroides</name>
    <dbReference type="NCBI Taxonomy" id="272943"/>
    <lineage>
        <taxon>Bacteria</taxon>
        <taxon>Pseudomonadati</taxon>
        <taxon>Pseudomonadota</taxon>
        <taxon>Alphaproteobacteria</taxon>
        <taxon>Rhodobacterales</taxon>
        <taxon>Paracoccaceae</taxon>
        <taxon>Cereibacter</taxon>
    </lineage>
</organism>
<dbReference type="EC" id="2.1.3.2" evidence="1"/>
<dbReference type="EMBL" id="CP000143">
    <property type="protein sequence ID" value="ABA80185.1"/>
    <property type="molecule type" value="Genomic_DNA"/>
</dbReference>
<dbReference type="RefSeq" id="WP_002721320.1">
    <property type="nucleotide sequence ID" value="NZ_CP030271.1"/>
</dbReference>
<dbReference type="RefSeq" id="YP_354086.1">
    <property type="nucleotide sequence ID" value="NC_007493.2"/>
</dbReference>
<dbReference type="SMR" id="Q3IZ49"/>
<dbReference type="STRING" id="272943.RSP_1002"/>
<dbReference type="EnsemblBacteria" id="ABA80185">
    <property type="protein sequence ID" value="ABA80185"/>
    <property type="gene ID" value="RSP_1002"/>
</dbReference>
<dbReference type="KEGG" id="rsp:RSP_1002"/>
<dbReference type="PATRIC" id="fig|272943.9.peg.2974"/>
<dbReference type="eggNOG" id="COG0540">
    <property type="taxonomic scope" value="Bacteria"/>
</dbReference>
<dbReference type="OrthoDB" id="9774690at2"/>
<dbReference type="PhylomeDB" id="Q3IZ49"/>
<dbReference type="UniPathway" id="UPA00070">
    <property type="reaction ID" value="UER00116"/>
</dbReference>
<dbReference type="Proteomes" id="UP000002703">
    <property type="component" value="Chromosome 1"/>
</dbReference>
<dbReference type="GO" id="GO:0005829">
    <property type="term" value="C:cytosol"/>
    <property type="evidence" value="ECO:0007669"/>
    <property type="project" value="TreeGrafter"/>
</dbReference>
<dbReference type="GO" id="GO:0016597">
    <property type="term" value="F:amino acid binding"/>
    <property type="evidence" value="ECO:0007669"/>
    <property type="project" value="InterPro"/>
</dbReference>
<dbReference type="GO" id="GO:0004070">
    <property type="term" value="F:aspartate carbamoyltransferase activity"/>
    <property type="evidence" value="ECO:0007669"/>
    <property type="project" value="UniProtKB-UniRule"/>
</dbReference>
<dbReference type="GO" id="GO:0006207">
    <property type="term" value="P:'de novo' pyrimidine nucleobase biosynthetic process"/>
    <property type="evidence" value="ECO:0007669"/>
    <property type="project" value="InterPro"/>
</dbReference>
<dbReference type="GO" id="GO:0044205">
    <property type="term" value="P:'de novo' UMP biosynthetic process"/>
    <property type="evidence" value="ECO:0007669"/>
    <property type="project" value="UniProtKB-UniRule"/>
</dbReference>
<dbReference type="GO" id="GO:0006520">
    <property type="term" value="P:amino acid metabolic process"/>
    <property type="evidence" value="ECO:0007669"/>
    <property type="project" value="InterPro"/>
</dbReference>
<dbReference type="FunFam" id="3.40.50.1370:FF:000007">
    <property type="entry name" value="Aspartate carbamoyltransferase"/>
    <property type="match status" value="1"/>
</dbReference>
<dbReference type="Gene3D" id="3.40.50.1370">
    <property type="entry name" value="Aspartate/ornithine carbamoyltransferase"/>
    <property type="match status" value="2"/>
</dbReference>
<dbReference type="HAMAP" id="MF_00001">
    <property type="entry name" value="Asp_carb_tr"/>
    <property type="match status" value="1"/>
</dbReference>
<dbReference type="InterPro" id="IPR006132">
    <property type="entry name" value="Asp/Orn_carbamoyltranf_P-bd"/>
</dbReference>
<dbReference type="InterPro" id="IPR006130">
    <property type="entry name" value="Asp/Orn_carbamoylTrfase"/>
</dbReference>
<dbReference type="InterPro" id="IPR036901">
    <property type="entry name" value="Asp/Orn_carbamoylTrfase_sf"/>
</dbReference>
<dbReference type="InterPro" id="IPR002082">
    <property type="entry name" value="Asp_carbamoyltransf"/>
</dbReference>
<dbReference type="InterPro" id="IPR006131">
    <property type="entry name" value="Asp_carbamoyltransf_Asp/Orn-bd"/>
</dbReference>
<dbReference type="NCBIfam" id="TIGR00670">
    <property type="entry name" value="asp_carb_tr"/>
    <property type="match status" value="1"/>
</dbReference>
<dbReference type="NCBIfam" id="NF002032">
    <property type="entry name" value="PRK00856.1"/>
    <property type="match status" value="1"/>
</dbReference>
<dbReference type="PANTHER" id="PTHR45753:SF6">
    <property type="entry name" value="ASPARTATE CARBAMOYLTRANSFERASE"/>
    <property type="match status" value="1"/>
</dbReference>
<dbReference type="PANTHER" id="PTHR45753">
    <property type="entry name" value="ORNITHINE CARBAMOYLTRANSFERASE, MITOCHONDRIAL"/>
    <property type="match status" value="1"/>
</dbReference>
<dbReference type="Pfam" id="PF00185">
    <property type="entry name" value="OTCace"/>
    <property type="match status" value="1"/>
</dbReference>
<dbReference type="Pfam" id="PF02729">
    <property type="entry name" value="OTCace_N"/>
    <property type="match status" value="1"/>
</dbReference>
<dbReference type="PRINTS" id="PR00100">
    <property type="entry name" value="AOTCASE"/>
</dbReference>
<dbReference type="PRINTS" id="PR00101">
    <property type="entry name" value="ATCASE"/>
</dbReference>
<dbReference type="SUPFAM" id="SSF53671">
    <property type="entry name" value="Aspartate/ornithine carbamoyltransferase"/>
    <property type="match status" value="1"/>
</dbReference>
<dbReference type="PROSITE" id="PS00097">
    <property type="entry name" value="CARBAMOYLTRANSFERASE"/>
    <property type="match status" value="1"/>
</dbReference>
<gene>
    <name evidence="1" type="primary">pyrB</name>
    <name type="ordered locus">RHOS4_26170</name>
    <name type="ordered locus">RSP_1002</name>
</gene>
<evidence type="ECO:0000255" key="1">
    <source>
        <dbReference type="HAMAP-Rule" id="MF_00001"/>
    </source>
</evidence>
<proteinExistence type="inferred from homology"/>
<reference key="1">
    <citation type="submission" date="2005-09" db="EMBL/GenBank/DDBJ databases">
        <title>Complete sequence of chromosome 1 of Rhodobacter sphaeroides 2.4.1.</title>
        <authorList>
            <person name="Copeland A."/>
            <person name="Lucas S."/>
            <person name="Lapidus A."/>
            <person name="Barry K."/>
            <person name="Detter J.C."/>
            <person name="Glavina T."/>
            <person name="Hammon N."/>
            <person name="Israni S."/>
            <person name="Pitluck S."/>
            <person name="Richardson P."/>
            <person name="Mackenzie C."/>
            <person name="Choudhary M."/>
            <person name="Larimer F."/>
            <person name="Hauser L.J."/>
            <person name="Land M."/>
            <person name="Donohue T.J."/>
            <person name="Kaplan S."/>
        </authorList>
    </citation>
    <scope>NUCLEOTIDE SEQUENCE [LARGE SCALE GENOMIC DNA]</scope>
    <source>
        <strain>ATCC 17023 / DSM 158 / JCM 6121 / CCUG 31486 / LMG 2827 / NBRC 12203 / NCIMB 8253 / ATH 2.4.1.</strain>
    </source>
</reference>
<keyword id="KW-0665">Pyrimidine biosynthesis</keyword>
<keyword id="KW-1185">Reference proteome</keyword>
<keyword id="KW-0808">Transferase</keyword>
<accession>Q3IZ49</accession>
<sequence>MTFRARHLLGIEHLAPDEIRSVLDLADSYVDLNRRTMKQSDALAGMTQINMFFENSTRTQSSFELAGKRLGADVMNMAVAQSSVKKGETLLDTAMTLNAMHPDLLVVRHPASGAVNLLASKVNCAVLNAGDGRHEHPTQALLDALTIRRAKGRIQRLTVAICGDIAHSRVARSNLILLGKMENRVRLIAPPTLMPPGVGEFGCELYDDMKKGLEGADVVMMLRLQKERMDGAFIPSEREYYHRFGLDAEKLAFAKEDAIVMHPGPMNRGVEIDGTLADDINRSVIQDQVEMGVAVRMACMDLLARNLRAERGRAAVGVMA</sequence>
<protein>
    <recommendedName>
        <fullName evidence="1">Aspartate carbamoyltransferase catalytic subunit</fullName>
        <ecNumber evidence="1">2.1.3.2</ecNumber>
    </recommendedName>
    <alternativeName>
        <fullName evidence="1">Aspartate transcarbamylase</fullName>
        <shortName evidence="1">ATCase</shortName>
    </alternativeName>
</protein>